<dbReference type="EC" id="2.3.2.13" evidence="1"/>
<dbReference type="EMBL" id="CP001598">
    <property type="protein sequence ID" value="ACQ48242.1"/>
    <property type="molecule type" value="Genomic_DNA"/>
</dbReference>
<dbReference type="RefSeq" id="WP_000635329.1">
    <property type="nucleotide sequence ID" value="NC_012659.1"/>
</dbReference>
<dbReference type="SMR" id="C3P6X0"/>
<dbReference type="GeneID" id="45023850"/>
<dbReference type="KEGG" id="bai:BAA_4198"/>
<dbReference type="HOGENOM" id="CLU_088922_0_0_9"/>
<dbReference type="GO" id="GO:0003810">
    <property type="term" value="F:protein-glutamine gamma-glutamyltransferase activity"/>
    <property type="evidence" value="ECO:0007669"/>
    <property type="project" value="UniProtKB-UniRule"/>
</dbReference>
<dbReference type="GO" id="GO:0030435">
    <property type="term" value="P:sporulation resulting in formation of a cellular spore"/>
    <property type="evidence" value="ECO:0007669"/>
    <property type="project" value="UniProtKB-UniRule"/>
</dbReference>
<dbReference type="HAMAP" id="MF_00727">
    <property type="entry name" value="Tgl"/>
    <property type="match status" value="1"/>
</dbReference>
<dbReference type="InterPro" id="IPR020916">
    <property type="entry name" value="Gln_gamma-glutamylTfrase_bac"/>
</dbReference>
<dbReference type="NCBIfam" id="NF002869">
    <property type="entry name" value="PRK03187.1"/>
    <property type="match status" value="1"/>
</dbReference>
<dbReference type="Pfam" id="PF20085">
    <property type="entry name" value="TGL"/>
    <property type="match status" value="1"/>
</dbReference>
<keyword id="KW-0012">Acyltransferase</keyword>
<keyword id="KW-0749">Sporulation</keyword>
<keyword id="KW-0808">Transferase</keyword>
<gene>
    <name evidence="1" type="primary">tgl</name>
    <name type="ordered locus">BAA_4198</name>
</gene>
<comment type="function">
    <text evidence="1">Probably plays a role in the assembly of the spore coat proteins by catalyzing epsilon-(gamma-glutamyl)lysine cross-links.</text>
</comment>
<comment type="catalytic activity">
    <reaction evidence="1">
        <text>L-glutaminyl-[protein] + L-lysyl-[protein] = [protein]-L-lysyl-N(6)-5-L-glutamyl-[protein] + NH4(+)</text>
        <dbReference type="Rhea" id="RHEA:54816"/>
        <dbReference type="Rhea" id="RHEA-COMP:9752"/>
        <dbReference type="Rhea" id="RHEA-COMP:10207"/>
        <dbReference type="Rhea" id="RHEA-COMP:14005"/>
        <dbReference type="ChEBI" id="CHEBI:28938"/>
        <dbReference type="ChEBI" id="CHEBI:29969"/>
        <dbReference type="ChEBI" id="CHEBI:30011"/>
        <dbReference type="ChEBI" id="CHEBI:138370"/>
        <dbReference type="EC" id="2.3.2.13"/>
    </reaction>
</comment>
<comment type="similarity">
    <text evidence="1">Belongs to the bacillus TGase family.</text>
</comment>
<sequence>MIVIGRSIVHPYITNEYEPFAAEKQQILSIMAGNQEIYSFRTSDELSFDLNLRVNIITSALELFQSGFQFRTFQQSFCNPQYWKRTSLGGFELLPNIPPSIAIQDIFKNGKLYGTECATAMIIIFYKALLSLYEKETFNRLFANLLLYTWDYDQDLKLITKTGGDLVPGDLVYFKNPQVNPATIEWQGENTIYLGNFFFYGHGVGVKTKEEIIYALNERRVPYAFISAFLTDTITRIDSRLMSYHASPSTPQTSIGFIPIRDDAIVATVGNTTTVY</sequence>
<evidence type="ECO:0000255" key="1">
    <source>
        <dbReference type="HAMAP-Rule" id="MF_00727"/>
    </source>
</evidence>
<reference key="1">
    <citation type="submission" date="2009-04" db="EMBL/GenBank/DDBJ databases">
        <title>Genome sequence of Bacillus anthracis A0248.</title>
        <authorList>
            <person name="Dodson R.J."/>
            <person name="Munk A.C."/>
            <person name="Bruce D."/>
            <person name="Detter C."/>
            <person name="Tapia R."/>
            <person name="Sutton G."/>
            <person name="Sims D."/>
            <person name="Brettin T."/>
        </authorList>
    </citation>
    <scope>NUCLEOTIDE SEQUENCE [LARGE SCALE GENOMIC DNA]</scope>
    <source>
        <strain>A0248</strain>
    </source>
</reference>
<proteinExistence type="inferred from homology"/>
<organism>
    <name type="scientific">Bacillus anthracis (strain A0248)</name>
    <dbReference type="NCBI Taxonomy" id="592021"/>
    <lineage>
        <taxon>Bacteria</taxon>
        <taxon>Bacillati</taxon>
        <taxon>Bacillota</taxon>
        <taxon>Bacilli</taxon>
        <taxon>Bacillales</taxon>
        <taxon>Bacillaceae</taxon>
        <taxon>Bacillus</taxon>
        <taxon>Bacillus cereus group</taxon>
    </lineage>
</organism>
<accession>C3P6X0</accession>
<feature type="chain" id="PRO_1000197960" description="Protein-glutamine gamma-glutamyltransferase">
    <location>
        <begin position="1"/>
        <end position="276"/>
    </location>
</feature>
<name>TGL_BACAA</name>
<protein>
    <recommendedName>
        <fullName evidence="1">Protein-glutamine gamma-glutamyltransferase</fullName>
        <ecNumber evidence="1">2.3.2.13</ecNumber>
    </recommendedName>
    <alternativeName>
        <fullName evidence="1">Transglutaminase</fullName>
        <shortName evidence="1">TGase</shortName>
    </alternativeName>
</protein>